<accession>Q03RK3</accession>
<gene>
    <name evidence="1" type="primary">thrS</name>
    <name type="ordered locus">LVIS_1036</name>
</gene>
<keyword id="KW-0030">Aminoacyl-tRNA synthetase</keyword>
<keyword id="KW-0067">ATP-binding</keyword>
<keyword id="KW-0963">Cytoplasm</keyword>
<keyword id="KW-0436">Ligase</keyword>
<keyword id="KW-0479">Metal-binding</keyword>
<keyword id="KW-0547">Nucleotide-binding</keyword>
<keyword id="KW-0648">Protein biosynthesis</keyword>
<keyword id="KW-1185">Reference proteome</keyword>
<keyword id="KW-0694">RNA-binding</keyword>
<keyword id="KW-0820">tRNA-binding</keyword>
<keyword id="KW-0862">Zinc</keyword>
<name>SYT_LEVBA</name>
<evidence type="ECO:0000255" key="1">
    <source>
        <dbReference type="HAMAP-Rule" id="MF_00184"/>
    </source>
</evidence>
<evidence type="ECO:0000255" key="2">
    <source>
        <dbReference type="PROSITE-ProRule" id="PRU01228"/>
    </source>
</evidence>
<protein>
    <recommendedName>
        <fullName evidence="1">Threonine--tRNA ligase</fullName>
        <ecNumber evidence="1">6.1.1.3</ecNumber>
    </recommendedName>
    <alternativeName>
        <fullName evidence="1">Threonyl-tRNA synthetase</fullName>
        <shortName evidence="1">ThrRS</shortName>
    </alternativeName>
</protein>
<reference key="1">
    <citation type="journal article" date="2006" name="Proc. Natl. Acad. Sci. U.S.A.">
        <title>Comparative genomics of the lactic acid bacteria.</title>
        <authorList>
            <person name="Makarova K.S."/>
            <person name="Slesarev A."/>
            <person name="Wolf Y.I."/>
            <person name="Sorokin A."/>
            <person name="Mirkin B."/>
            <person name="Koonin E.V."/>
            <person name="Pavlov A."/>
            <person name="Pavlova N."/>
            <person name="Karamychev V."/>
            <person name="Polouchine N."/>
            <person name="Shakhova V."/>
            <person name="Grigoriev I."/>
            <person name="Lou Y."/>
            <person name="Rohksar D."/>
            <person name="Lucas S."/>
            <person name="Huang K."/>
            <person name="Goodstein D.M."/>
            <person name="Hawkins T."/>
            <person name="Plengvidhya V."/>
            <person name="Welker D."/>
            <person name="Hughes J."/>
            <person name="Goh Y."/>
            <person name="Benson A."/>
            <person name="Baldwin K."/>
            <person name="Lee J.-H."/>
            <person name="Diaz-Muniz I."/>
            <person name="Dosti B."/>
            <person name="Smeianov V."/>
            <person name="Wechter W."/>
            <person name="Barabote R."/>
            <person name="Lorca G."/>
            <person name="Altermann E."/>
            <person name="Barrangou R."/>
            <person name="Ganesan B."/>
            <person name="Xie Y."/>
            <person name="Rawsthorne H."/>
            <person name="Tamir D."/>
            <person name="Parker C."/>
            <person name="Breidt F."/>
            <person name="Broadbent J.R."/>
            <person name="Hutkins R."/>
            <person name="O'Sullivan D."/>
            <person name="Steele J."/>
            <person name="Unlu G."/>
            <person name="Saier M.H. Jr."/>
            <person name="Klaenhammer T."/>
            <person name="Richardson P."/>
            <person name="Kozyavkin S."/>
            <person name="Weimer B.C."/>
            <person name="Mills D.A."/>
        </authorList>
    </citation>
    <scope>NUCLEOTIDE SEQUENCE [LARGE SCALE GENOMIC DNA]</scope>
    <source>
        <strain>ATCC 367 / BCRC 12310 / CIP 105137 / JCM 1170 / LMG 11437 / NCIMB 947 / NCTC 947</strain>
    </source>
</reference>
<sequence length="647" mass="72419">MADISIKFPDGAVKAFPAGTTPADVAKSISISLAKKAVAAKLDGQLVDYLTPLASDGSIEIVTKDSDDGLTVLRNTTAALLRIALKKEFPAIRLGKVSADEDGFFVDTDKDDQQVSVDELDALAVIVEKLVSDKLDIERITVSKADALADAKDDQFTTALINAVDGDSVPFLKIGDYQILSDGAQLTNTGDVKKFKLLSVAGAYWQGKSSNPMLQRIYGTAFYKQADLDADLARRQEARERDHRVIGNQLDLFFVDPKVGAGLPYWMPNGATIRRTIERYIIDKEVSNGYQHVYTPVLANLDLYKQSGHWAHYREDMFPPMDMGDGEMLELRPMNCPSHIQVYNHHIRSYRELPLRIAELGMMHRYEKSGALSGLQRVREMTLNDGHTFVAPEQIQDEFKSILDLMVKVYADFDIKDYTFRLSYRDPKNTEKYFDDDEMWNNAQAMLKGAMDDLGLPYVEAEGEAAFYGPKLDVQTKTALGNEETLSTIQLDFMLPERFDLHYVGADGEEHRPVMIHRGLVSTMERFTAYLTEIYKGAFPTWLAPKQVTIIPVSEEKHGAYADKLAAELKAADIRVNVDKRGEKMGYLIRDAQTHKIPYTLVVGEDEMSNGSVSVRKYGENQTTSMSSDAFVKEILADIASYSREND</sequence>
<comment type="function">
    <text evidence="1">Catalyzes the attachment of threonine to tRNA(Thr) in a two-step reaction: L-threonine is first activated by ATP to form Thr-AMP and then transferred to the acceptor end of tRNA(Thr). Also edits incorrectly charged L-seryl-tRNA(Thr).</text>
</comment>
<comment type="catalytic activity">
    <reaction evidence="1">
        <text>tRNA(Thr) + L-threonine + ATP = L-threonyl-tRNA(Thr) + AMP + diphosphate + H(+)</text>
        <dbReference type="Rhea" id="RHEA:24624"/>
        <dbReference type="Rhea" id="RHEA-COMP:9670"/>
        <dbReference type="Rhea" id="RHEA-COMP:9704"/>
        <dbReference type="ChEBI" id="CHEBI:15378"/>
        <dbReference type="ChEBI" id="CHEBI:30616"/>
        <dbReference type="ChEBI" id="CHEBI:33019"/>
        <dbReference type="ChEBI" id="CHEBI:57926"/>
        <dbReference type="ChEBI" id="CHEBI:78442"/>
        <dbReference type="ChEBI" id="CHEBI:78534"/>
        <dbReference type="ChEBI" id="CHEBI:456215"/>
        <dbReference type="EC" id="6.1.1.3"/>
    </reaction>
</comment>
<comment type="cofactor">
    <cofactor evidence="1">
        <name>Zn(2+)</name>
        <dbReference type="ChEBI" id="CHEBI:29105"/>
    </cofactor>
    <text evidence="1">Binds 1 zinc ion per subunit.</text>
</comment>
<comment type="subunit">
    <text evidence="1">Homodimer.</text>
</comment>
<comment type="subcellular location">
    <subcellularLocation>
        <location evidence="1">Cytoplasm</location>
    </subcellularLocation>
</comment>
<comment type="similarity">
    <text evidence="1">Belongs to the class-II aminoacyl-tRNA synthetase family.</text>
</comment>
<proteinExistence type="inferred from homology"/>
<organism>
    <name type="scientific">Levilactobacillus brevis (strain ATCC 367 / BCRC 12310 / CIP 105137 / JCM 1170 / LMG 11437 / NCIMB 947 / NCTC 947)</name>
    <name type="common">Lactobacillus brevis</name>
    <dbReference type="NCBI Taxonomy" id="387344"/>
    <lineage>
        <taxon>Bacteria</taxon>
        <taxon>Bacillati</taxon>
        <taxon>Bacillota</taxon>
        <taxon>Bacilli</taxon>
        <taxon>Lactobacillales</taxon>
        <taxon>Lactobacillaceae</taxon>
        <taxon>Levilactobacillus</taxon>
    </lineage>
</organism>
<dbReference type="EC" id="6.1.1.3" evidence="1"/>
<dbReference type="EMBL" id="CP000416">
    <property type="protein sequence ID" value="ABJ64169.1"/>
    <property type="molecule type" value="Genomic_DNA"/>
</dbReference>
<dbReference type="RefSeq" id="WP_011667799.1">
    <property type="nucleotide sequence ID" value="NC_008497.1"/>
</dbReference>
<dbReference type="SMR" id="Q03RK3"/>
<dbReference type="STRING" id="387344.LVIS_1036"/>
<dbReference type="KEGG" id="lbr:LVIS_1036"/>
<dbReference type="PATRIC" id="fig|387344.15.peg.1012"/>
<dbReference type="eggNOG" id="COG0441">
    <property type="taxonomic scope" value="Bacteria"/>
</dbReference>
<dbReference type="HOGENOM" id="CLU_008554_0_1_9"/>
<dbReference type="Proteomes" id="UP000001652">
    <property type="component" value="Chromosome"/>
</dbReference>
<dbReference type="GO" id="GO:0005737">
    <property type="term" value="C:cytoplasm"/>
    <property type="evidence" value="ECO:0007669"/>
    <property type="project" value="UniProtKB-SubCell"/>
</dbReference>
<dbReference type="GO" id="GO:0005524">
    <property type="term" value="F:ATP binding"/>
    <property type="evidence" value="ECO:0007669"/>
    <property type="project" value="UniProtKB-UniRule"/>
</dbReference>
<dbReference type="GO" id="GO:0140096">
    <property type="term" value="F:catalytic activity, acting on a protein"/>
    <property type="evidence" value="ECO:0007669"/>
    <property type="project" value="UniProtKB-ARBA"/>
</dbReference>
<dbReference type="GO" id="GO:0046872">
    <property type="term" value="F:metal ion binding"/>
    <property type="evidence" value="ECO:0007669"/>
    <property type="project" value="UniProtKB-KW"/>
</dbReference>
<dbReference type="GO" id="GO:0004829">
    <property type="term" value="F:threonine-tRNA ligase activity"/>
    <property type="evidence" value="ECO:0007669"/>
    <property type="project" value="UniProtKB-UniRule"/>
</dbReference>
<dbReference type="GO" id="GO:0016740">
    <property type="term" value="F:transferase activity"/>
    <property type="evidence" value="ECO:0007669"/>
    <property type="project" value="UniProtKB-ARBA"/>
</dbReference>
<dbReference type="GO" id="GO:0000049">
    <property type="term" value="F:tRNA binding"/>
    <property type="evidence" value="ECO:0007669"/>
    <property type="project" value="UniProtKB-KW"/>
</dbReference>
<dbReference type="GO" id="GO:0006435">
    <property type="term" value="P:threonyl-tRNA aminoacylation"/>
    <property type="evidence" value="ECO:0007669"/>
    <property type="project" value="UniProtKB-UniRule"/>
</dbReference>
<dbReference type="CDD" id="cd01667">
    <property type="entry name" value="TGS_ThrRS"/>
    <property type="match status" value="1"/>
</dbReference>
<dbReference type="CDD" id="cd00860">
    <property type="entry name" value="ThrRS_anticodon"/>
    <property type="match status" value="1"/>
</dbReference>
<dbReference type="CDD" id="cd00771">
    <property type="entry name" value="ThrRS_core"/>
    <property type="match status" value="1"/>
</dbReference>
<dbReference type="FunFam" id="3.10.20.30:FF:000005">
    <property type="entry name" value="Threonine--tRNA ligase"/>
    <property type="match status" value="1"/>
</dbReference>
<dbReference type="FunFam" id="3.30.930.10:FF:000002">
    <property type="entry name" value="Threonine--tRNA ligase"/>
    <property type="match status" value="1"/>
</dbReference>
<dbReference type="FunFam" id="3.40.50.800:FF:000001">
    <property type="entry name" value="Threonine--tRNA ligase"/>
    <property type="match status" value="1"/>
</dbReference>
<dbReference type="Gene3D" id="3.10.20.30">
    <property type="match status" value="1"/>
</dbReference>
<dbReference type="Gene3D" id="3.40.50.800">
    <property type="entry name" value="Anticodon-binding domain"/>
    <property type="match status" value="1"/>
</dbReference>
<dbReference type="Gene3D" id="3.30.930.10">
    <property type="entry name" value="Bira Bifunctional Protein, Domain 2"/>
    <property type="match status" value="1"/>
</dbReference>
<dbReference type="Gene3D" id="3.30.980.10">
    <property type="entry name" value="Threonyl-trna Synthetase, Chain A, domain 2"/>
    <property type="match status" value="1"/>
</dbReference>
<dbReference type="HAMAP" id="MF_00184">
    <property type="entry name" value="Thr_tRNA_synth"/>
    <property type="match status" value="1"/>
</dbReference>
<dbReference type="InterPro" id="IPR002314">
    <property type="entry name" value="aa-tRNA-synt_IIb"/>
</dbReference>
<dbReference type="InterPro" id="IPR006195">
    <property type="entry name" value="aa-tRNA-synth_II"/>
</dbReference>
<dbReference type="InterPro" id="IPR045864">
    <property type="entry name" value="aa-tRNA-synth_II/BPL/LPL"/>
</dbReference>
<dbReference type="InterPro" id="IPR004154">
    <property type="entry name" value="Anticodon-bd"/>
</dbReference>
<dbReference type="InterPro" id="IPR036621">
    <property type="entry name" value="Anticodon-bd_dom_sf"/>
</dbReference>
<dbReference type="InterPro" id="IPR012675">
    <property type="entry name" value="Beta-grasp_dom_sf"/>
</dbReference>
<dbReference type="InterPro" id="IPR004095">
    <property type="entry name" value="TGS"/>
</dbReference>
<dbReference type="InterPro" id="IPR012676">
    <property type="entry name" value="TGS-like"/>
</dbReference>
<dbReference type="InterPro" id="IPR002320">
    <property type="entry name" value="Thr-tRNA-ligase_IIa"/>
</dbReference>
<dbReference type="InterPro" id="IPR018163">
    <property type="entry name" value="Thr/Ala-tRNA-synth_IIc_edit"/>
</dbReference>
<dbReference type="InterPro" id="IPR047246">
    <property type="entry name" value="ThrRS_anticodon"/>
</dbReference>
<dbReference type="InterPro" id="IPR033728">
    <property type="entry name" value="ThrRS_core"/>
</dbReference>
<dbReference type="InterPro" id="IPR012947">
    <property type="entry name" value="tRNA_SAD"/>
</dbReference>
<dbReference type="NCBIfam" id="TIGR00418">
    <property type="entry name" value="thrS"/>
    <property type="match status" value="1"/>
</dbReference>
<dbReference type="PANTHER" id="PTHR11451:SF56">
    <property type="entry name" value="THREONINE--TRNA LIGASE 1"/>
    <property type="match status" value="1"/>
</dbReference>
<dbReference type="PANTHER" id="PTHR11451">
    <property type="entry name" value="THREONINE-TRNA LIGASE"/>
    <property type="match status" value="1"/>
</dbReference>
<dbReference type="Pfam" id="PF03129">
    <property type="entry name" value="HGTP_anticodon"/>
    <property type="match status" value="1"/>
</dbReference>
<dbReference type="Pfam" id="PF02824">
    <property type="entry name" value="TGS"/>
    <property type="match status" value="1"/>
</dbReference>
<dbReference type="Pfam" id="PF00587">
    <property type="entry name" value="tRNA-synt_2b"/>
    <property type="match status" value="1"/>
</dbReference>
<dbReference type="Pfam" id="PF07973">
    <property type="entry name" value="tRNA_SAD"/>
    <property type="match status" value="1"/>
</dbReference>
<dbReference type="PRINTS" id="PR01047">
    <property type="entry name" value="TRNASYNTHTHR"/>
</dbReference>
<dbReference type="SMART" id="SM00863">
    <property type="entry name" value="tRNA_SAD"/>
    <property type="match status" value="1"/>
</dbReference>
<dbReference type="SUPFAM" id="SSF52954">
    <property type="entry name" value="Class II aaRS ABD-related"/>
    <property type="match status" value="1"/>
</dbReference>
<dbReference type="SUPFAM" id="SSF55681">
    <property type="entry name" value="Class II aaRS and biotin synthetases"/>
    <property type="match status" value="1"/>
</dbReference>
<dbReference type="SUPFAM" id="SSF81271">
    <property type="entry name" value="TGS-like"/>
    <property type="match status" value="1"/>
</dbReference>
<dbReference type="SUPFAM" id="SSF55186">
    <property type="entry name" value="ThrRS/AlaRS common domain"/>
    <property type="match status" value="1"/>
</dbReference>
<dbReference type="PROSITE" id="PS50862">
    <property type="entry name" value="AA_TRNA_LIGASE_II"/>
    <property type="match status" value="1"/>
</dbReference>
<dbReference type="PROSITE" id="PS51880">
    <property type="entry name" value="TGS"/>
    <property type="match status" value="1"/>
</dbReference>
<feature type="chain" id="PRO_1000098581" description="Threonine--tRNA ligase">
    <location>
        <begin position="1"/>
        <end position="647"/>
    </location>
</feature>
<feature type="domain" description="TGS" evidence="2">
    <location>
        <begin position="1"/>
        <end position="63"/>
    </location>
</feature>
<feature type="region of interest" description="Catalytic" evidence="1">
    <location>
        <begin position="242"/>
        <end position="540"/>
    </location>
</feature>
<feature type="binding site" evidence="1">
    <location>
        <position position="336"/>
    </location>
    <ligand>
        <name>Zn(2+)</name>
        <dbReference type="ChEBI" id="CHEBI:29105"/>
    </ligand>
</feature>
<feature type="binding site" evidence="1">
    <location>
        <position position="387"/>
    </location>
    <ligand>
        <name>Zn(2+)</name>
        <dbReference type="ChEBI" id="CHEBI:29105"/>
    </ligand>
</feature>
<feature type="binding site" evidence="1">
    <location>
        <position position="517"/>
    </location>
    <ligand>
        <name>Zn(2+)</name>
        <dbReference type="ChEBI" id="CHEBI:29105"/>
    </ligand>
</feature>